<sequence>MDYLTDVTGRSSRVLRGTVNRLWYGHRQVRFQDCLQDVQRENMARPPQALRSDTGQRKTLEKKDGRRMSFQRPKGTMEYTVESRDSLNSIALKFDTTPNELVQLNKLFSRAVVPGQLLYVPDPDYISSVESSPSLSPISLLSPTSSEAEFEKRTDTERMPHKESTSSPAYSTTRQSRVVSSTSEEEEAFTEKFLKINCKYITDGKGIVTGVLLVTPNNIMFDPHKNDLLVQENGCEEYGIMCPMEEVTSAAMHKEIVNSKLKDSIPVDVDQLSCMREFCHFKKISPGNLHDLDSKMWDAGNDSASTAPRSTEESLSEDVFTESELSPIREEHLSSDELRQDKSSGTSSESVQTINQNISECSVNISDCADASDDVKGSLEPSGNDSGIVSSINDLERSESSMNVGDGLDKDISESSIVLTEANEGQAESKGSKNNCNDGNLADNQTGDQNHSREAAVVGNHRHEALQEKTLKQSFGDSETEAEELRKFWKDLTMQQAKQQREDMQHTTQKEIKGKMPTAETHIEGVCSSVAKEKRRHRTHRYLCLRVGKPMRKTFVSQASASMQQYAQRDKLEYWFAVPHERSDHLYSFFIQWSPDLYAEELGESAREPGFVVVKKNEEGESSDRSTNDSASRLWEVVSVAEYHRRIDALNTEELRTLCRRLKITTREDVNSKQATNIKHDQEPESFRPNLSDPSSLLQTEQIEKLTKHLPPRTIGYPWTLVYSTAKHGMSLKTLYRLMLGLDTPVLLVIKDSDSQIFGALASEPFKVSDCFYGTGETFLFTFCPDFEVFKWTGDNMFFIKGDMDSLAFGGGGGEFALWLDGDSYHGRSHTCKTFGNSILSKKEDFIVQDIEIWAFE</sequence>
<accession>B4F6Q9</accession>
<reference key="1">
    <citation type="submission" date="2008-07" db="EMBL/GenBank/DDBJ databases">
        <authorList>
            <consortium name="NIH - Xenopus Gene Collection (XGC) project"/>
        </authorList>
    </citation>
    <scope>NUCLEOTIDE SEQUENCE [LARGE SCALE MRNA]</scope>
    <source>
        <tissue>Ovary</tissue>
    </source>
</reference>
<feature type="chain" id="PRO_0000393587" description="Oxidation resistance protein 1">
    <location>
        <begin position="1"/>
        <end position="857"/>
    </location>
</feature>
<feature type="domain" description="LysM" evidence="2">
    <location>
        <begin position="77"/>
        <end position="120"/>
    </location>
</feature>
<feature type="domain" description="GRAM">
    <location>
        <begin position="190"/>
        <end position="249"/>
    </location>
</feature>
<feature type="domain" description="TLDc" evidence="3">
    <location>
        <begin position="696"/>
        <end position="857"/>
    </location>
</feature>
<feature type="region of interest" description="Disordered" evidence="4">
    <location>
        <begin position="43"/>
        <end position="74"/>
    </location>
</feature>
<feature type="region of interest" description="Disordered" evidence="4">
    <location>
        <begin position="131"/>
        <end position="183"/>
    </location>
</feature>
<feature type="region of interest" description="Disordered" evidence="4">
    <location>
        <begin position="300"/>
        <end position="353"/>
    </location>
</feature>
<feature type="region of interest" description="Disordered" evidence="4">
    <location>
        <begin position="372"/>
        <end position="409"/>
    </location>
</feature>
<feature type="region of interest" description="Disordered" evidence="4">
    <location>
        <begin position="421"/>
        <end position="450"/>
    </location>
</feature>
<feature type="region of interest" description="Disordered" evidence="4">
    <location>
        <begin position="673"/>
        <end position="694"/>
    </location>
</feature>
<feature type="compositionally biased region" description="Basic and acidic residues" evidence="4">
    <location>
        <begin position="54"/>
        <end position="67"/>
    </location>
</feature>
<feature type="compositionally biased region" description="Low complexity" evidence="4">
    <location>
        <begin position="131"/>
        <end position="146"/>
    </location>
</feature>
<feature type="compositionally biased region" description="Basic and acidic residues" evidence="4">
    <location>
        <begin position="149"/>
        <end position="164"/>
    </location>
</feature>
<feature type="compositionally biased region" description="Low complexity" evidence="4">
    <location>
        <begin position="171"/>
        <end position="182"/>
    </location>
</feature>
<feature type="compositionally biased region" description="Basic and acidic residues" evidence="4">
    <location>
        <begin position="327"/>
        <end position="342"/>
    </location>
</feature>
<feature type="compositionally biased region" description="Polar residues" evidence="4">
    <location>
        <begin position="343"/>
        <end position="353"/>
    </location>
</feature>
<feature type="compositionally biased region" description="Polar residues" evidence="4">
    <location>
        <begin position="381"/>
        <end position="393"/>
    </location>
</feature>
<feature type="compositionally biased region" description="Polar residues" evidence="4">
    <location>
        <begin position="432"/>
        <end position="449"/>
    </location>
</feature>
<comment type="function">
    <text evidence="1">May be involved in protection from oxidative damage.</text>
</comment>
<comment type="subcellular location">
    <subcellularLocation>
        <location evidence="1">Mitochondrion</location>
    </subcellularLocation>
</comment>
<comment type="similarity">
    <text evidence="5">Belongs to the OXR1 family.</text>
</comment>
<comment type="sequence caution" evidence="5">
    <conflict type="frameshift">
        <sequence resource="EMBL-CDS" id="AAI67975"/>
    </conflict>
</comment>
<proteinExistence type="evidence at transcript level"/>
<protein>
    <recommendedName>
        <fullName>Oxidation resistance protein 1</fullName>
    </recommendedName>
</protein>
<gene>
    <name type="primary">oxr1</name>
</gene>
<evidence type="ECO:0000250" key="1"/>
<evidence type="ECO:0000255" key="2">
    <source>
        <dbReference type="PROSITE-ProRule" id="PRU01118"/>
    </source>
</evidence>
<evidence type="ECO:0000255" key="3">
    <source>
        <dbReference type="PROSITE-ProRule" id="PRU01234"/>
    </source>
</evidence>
<evidence type="ECO:0000256" key="4">
    <source>
        <dbReference type="SAM" id="MobiDB-lite"/>
    </source>
</evidence>
<evidence type="ECO:0000305" key="5"/>
<keyword id="KW-0496">Mitochondrion</keyword>
<keyword id="KW-1185">Reference proteome</keyword>
<keyword id="KW-0346">Stress response</keyword>
<organism>
    <name type="scientific">Xenopus laevis</name>
    <name type="common">African clawed frog</name>
    <dbReference type="NCBI Taxonomy" id="8355"/>
    <lineage>
        <taxon>Eukaryota</taxon>
        <taxon>Metazoa</taxon>
        <taxon>Chordata</taxon>
        <taxon>Craniata</taxon>
        <taxon>Vertebrata</taxon>
        <taxon>Euteleostomi</taxon>
        <taxon>Amphibia</taxon>
        <taxon>Batrachia</taxon>
        <taxon>Anura</taxon>
        <taxon>Pipoidea</taxon>
        <taxon>Pipidae</taxon>
        <taxon>Xenopodinae</taxon>
        <taxon>Xenopus</taxon>
        <taxon>Xenopus</taxon>
    </lineage>
</organism>
<dbReference type="EMBL" id="BC167975">
    <property type="protein sequence ID" value="AAI67975.1"/>
    <property type="status" value="ALT_FRAME"/>
    <property type="molecule type" value="mRNA"/>
</dbReference>
<dbReference type="RefSeq" id="NP_001128694.1">
    <property type="nucleotide sequence ID" value="NM_001135222.1"/>
</dbReference>
<dbReference type="SMR" id="B4F6Q9"/>
<dbReference type="GeneID" id="100190768"/>
<dbReference type="KEGG" id="xla:100190768"/>
<dbReference type="AGR" id="Xenbase:XB-GENE-980210"/>
<dbReference type="CTD" id="100190768"/>
<dbReference type="Xenbase" id="XB-GENE-980210">
    <property type="gene designation" value="oxr1.L"/>
</dbReference>
<dbReference type="OrthoDB" id="26679at2759"/>
<dbReference type="Proteomes" id="UP000186698">
    <property type="component" value="Chromosome 6L"/>
</dbReference>
<dbReference type="Bgee" id="100190768">
    <property type="expression patterns" value="Expressed in muscle tissue and 19 other cell types or tissues"/>
</dbReference>
<dbReference type="GO" id="GO:0005739">
    <property type="term" value="C:mitochondrion"/>
    <property type="evidence" value="ECO:0007669"/>
    <property type="project" value="UniProtKB-SubCell"/>
</dbReference>
<dbReference type="GO" id="GO:0005634">
    <property type="term" value="C:nucleus"/>
    <property type="evidence" value="ECO:0000318"/>
    <property type="project" value="GO_Central"/>
</dbReference>
<dbReference type="GO" id="GO:0006979">
    <property type="term" value="P:response to oxidative stress"/>
    <property type="evidence" value="ECO:0000318"/>
    <property type="project" value="GO_Central"/>
</dbReference>
<dbReference type="CDD" id="cd00118">
    <property type="entry name" value="LysM"/>
    <property type="match status" value="1"/>
</dbReference>
<dbReference type="FunFam" id="3.10.350.10:FF:000002">
    <property type="entry name" value="Oxidation resistance protein 1 isoform X1"/>
    <property type="match status" value="1"/>
</dbReference>
<dbReference type="Gene3D" id="3.10.350.10">
    <property type="entry name" value="LysM domain"/>
    <property type="match status" value="1"/>
</dbReference>
<dbReference type="InterPro" id="IPR018392">
    <property type="entry name" value="LysM_dom"/>
</dbReference>
<dbReference type="InterPro" id="IPR036779">
    <property type="entry name" value="LysM_dom_sf"/>
</dbReference>
<dbReference type="InterPro" id="IPR006571">
    <property type="entry name" value="TLDc_dom"/>
</dbReference>
<dbReference type="PANTHER" id="PTHR23354">
    <property type="entry name" value="NUCLEOLAR PROTEIN 7/ESTROGEN RECEPTOR COACTIVATOR-RELATED"/>
    <property type="match status" value="1"/>
</dbReference>
<dbReference type="PANTHER" id="PTHR23354:SF69">
    <property type="entry name" value="OXIDATION RESISTANCE PROTEIN 1"/>
    <property type="match status" value="1"/>
</dbReference>
<dbReference type="Pfam" id="PF01476">
    <property type="entry name" value="LysM"/>
    <property type="match status" value="1"/>
</dbReference>
<dbReference type="Pfam" id="PF07534">
    <property type="entry name" value="TLD"/>
    <property type="match status" value="1"/>
</dbReference>
<dbReference type="SMART" id="SM00257">
    <property type="entry name" value="LysM"/>
    <property type="match status" value="1"/>
</dbReference>
<dbReference type="SMART" id="SM00584">
    <property type="entry name" value="TLDc"/>
    <property type="match status" value="1"/>
</dbReference>
<dbReference type="SUPFAM" id="SSF54106">
    <property type="entry name" value="LysM domain"/>
    <property type="match status" value="1"/>
</dbReference>
<dbReference type="PROSITE" id="PS51782">
    <property type="entry name" value="LYSM"/>
    <property type="match status" value="1"/>
</dbReference>
<dbReference type="PROSITE" id="PS51886">
    <property type="entry name" value="TLDC"/>
    <property type="match status" value="1"/>
</dbReference>
<name>OXR1_XENLA</name>